<proteinExistence type="inferred from homology"/>
<gene>
    <name evidence="1" type="primary">rpoB</name>
    <name type="ordered locus">RD1_4019</name>
</gene>
<dbReference type="EC" id="2.7.7.6" evidence="1"/>
<dbReference type="EMBL" id="CP000362">
    <property type="protein sequence ID" value="ABG33466.1"/>
    <property type="molecule type" value="Genomic_DNA"/>
</dbReference>
<dbReference type="RefSeq" id="WP_011570076.1">
    <property type="nucleotide sequence ID" value="NC_008209.1"/>
</dbReference>
<dbReference type="SMR" id="Q160X7"/>
<dbReference type="STRING" id="375451.RD1_4019"/>
<dbReference type="KEGG" id="rde:RD1_4019"/>
<dbReference type="eggNOG" id="COG0085">
    <property type="taxonomic scope" value="Bacteria"/>
</dbReference>
<dbReference type="HOGENOM" id="CLU_000524_4_1_5"/>
<dbReference type="OrthoDB" id="9803954at2"/>
<dbReference type="Proteomes" id="UP000007029">
    <property type="component" value="Chromosome"/>
</dbReference>
<dbReference type="GO" id="GO:0000428">
    <property type="term" value="C:DNA-directed RNA polymerase complex"/>
    <property type="evidence" value="ECO:0007669"/>
    <property type="project" value="UniProtKB-KW"/>
</dbReference>
<dbReference type="GO" id="GO:0003677">
    <property type="term" value="F:DNA binding"/>
    <property type="evidence" value="ECO:0007669"/>
    <property type="project" value="UniProtKB-UniRule"/>
</dbReference>
<dbReference type="GO" id="GO:0003899">
    <property type="term" value="F:DNA-directed RNA polymerase activity"/>
    <property type="evidence" value="ECO:0007669"/>
    <property type="project" value="UniProtKB-UniRule"/>
</dbReference>
<dbReference type="GO" id="GO:0032549">
    <property type="term" value="F:ribonucleoside binding"/>
    <property type="evidence" value="ECO:0007669"/>
    <property type="project" value="InterPro"/>
</dbReference>
<dbReference type="GO" id="GO:0006351">
    <property type="term" value="P:DNA-templated transcription"/>
    <property type="evidence" value="ECO:0007669"/>
    <property type="project" value="UniProtKB-UniRule"/>
</dbReference>
<dbReference type="CDD" id="cd00653">
    <property type="entry name" value="RNA_pol_B_RPB2"/>
    <property type="match status" value="1"/>
</dbReference>
<dbReference type="FunFam" id="2.40.50.100:FF:000006">
    <property type="entry name" value="DNA-directed RNA polymerase subunit beta"/>
    <property type="match status" value="1"/>
</dbReference>
<dbReference type="FunFam" id="3.90.1800.10:FF:000001">
    <property type="entry name" value="DNA-directed RNA polymerase subunit beta"/>
    <property type="match status" value="1"/>
</dbReference>
<dbReference type="Gene3D" id="2.40.50.100">
    <property type="match status" value="1"/>
</dbReference>
<dbReference type="Gene3D" id="2.40.50.150">
    <property type="match status" value="1"/>
</dbReference>
<dbReference type="Gene3D" id="3.90.1100.10">
    <property type="match status" value="2"/>
</dbReference>
<dbReference type="Gene3D" id="2.30.150.10">
    <property type="entry name" value="DNA-directed RNA polymerase, beta subunit, external 1 domain"/>
    <property type="match status" value="1"/>
</dbReference>
<dbReference type="Gene3D" id="2.40.270.10">
    <property type="entry name" value="DNA-directed RNA polymerase, subunit 2, domain 6"/>
    <property type="match status" value="1"/>
</dbReference>
<dbReference type="Gene3D" id="3.90.1800.10">
    <property type="entry name" value="RNA polymerase alpha subunit dimerisation domain"/>
    <property type="match status" value="1"/>
</dbReference>
<dbReference type="Gene3D" id="3.90.1110.10">
    <property type="entry name" value="RNA polymerase Rpb2, domain 2"/>
    <property type="match status" value="1"/>
</dbReference>
<dbReference type="HAMAP" id="MF_01321">
    <property type="entry name" value="RNApol_bact_RpoB"/>
    <property type="match status" value="1"/>
</dbReference>
<dbReference type="InterPro" id="IPR042107">
    <property type="entry name" value="DNA-dir_RNA_pol_bsu_ext_1_sf"/>
</dbReference>
<dbReference type="InterPro" id="IPR019462">
    <property type="entry name" value="DNA-dir_RNA_pol_bsu_external_1"/>
</dbReference>
<dbReference type="InterPro" id="IPR015712">
    <property type="entry name" value="DNA-dir_RNA_pol_su2"/>
</dbReference>
<dbReference type="InterPro" id="IPR007120">
    <property type="entry name" value="DNA-dir_RNAP_su2_dom"/>
</dbReference>
<dbReference type="InterPro" id="IPR037033">
    <property type="entry name" value="DNA-dir_RNAP_su2_hyb_sf"/>
</dbReference>
<dbReference type="InterPro" id="IPR010243">
    <property type="entry name" value="RNA_pol_bsu_bac"/>
</dbReference>
<dbReference type="InterPro" id="IPR007121">
    <property type="entry name" value="RNA_pol_bsu_CS"/>
</dbReference>
<dbReference type="InterPro" id="IPR007644">
    <property type="entry name" value="RNA_pol_bsu_protrusion"/>
</dbReference>
<dbReference type="InterPro" id="IPR007642">
    <property type="entry name" value="RNA_pol_Rpb2_2"/>
</dbReference>
<dbReference type="InterPro" id="IPR037034">
    <property type="entry name" value="RNA_pol_Rpb2_2_sf"/>
</dbReference>
<dbReference type="InterPro" id="IPR007645">
    <property type="entry name" value="RNA_pol_Rpb2_3"/>
</dbReference>
<dbReference type="InterPro" id="IPR007641">
    <property type="entry name" value="RNA_pol_Rpb2_7"/>
</dbReference>
<dbReference type="InterPro" id="IPR014724">
    <property type="entry name" value="RNA_pol_RPB2_OB-fold"/>
</dbReference>
<dbReference type="NCBIfam" id="NF001616">
    <property type="entry name" value="PRK00405.1"/>
    <property type="match status" value="1"/>
</dbReference>
<dbReference type="NCBIfam" id="TIGR02013">
    <property type="entry name" value="rpoB"/>
    <property type="match status" value="1"/>
</dbReference>
<dbReference type="PANTHER" id="PTHR20856">
    <property type="entry name" value="DNA-DIRECTED RNA POLYMERASE I SUBUNIT 2"/>
    <property type="match status" value="1"/>
</dbReference>
<dbReference type="Pfam" id="PF04563">
    <property type="entry name" value="RNA_pol_Rpb2_1"/>
    <property type="match status" value="1"/>
</dbReference>
<dbReference type="Pfam" id="PF04561">
    <property type="entry name" value="RNA_pol_Rpb2_2"/>
    <property type="match status" value="2"/>
</dbReference>
<dbReference type="Pfam" id="PF04565">
    <property type="entry name" value="RNA_pol_Rpb2_3"/>
    <property type="match status" value="1"/>
</dbReference>
<dbReference type="Pfam" id="PF10385">
    <property type="entry name" value="RNA_pol_Rpb2_45"/>
    <property type="match status" value="1"/>
</dbReference>
<dbReference type="Pfam" id="PF00562">
    <property type="entry name" value="RNA_pol_Rpb2_6"/>
    <property type="match status" value="1"/>
</dbReference>
<dbReference type="Pfam" id="PF04560">
    <property type="entry name" value="RNA_pol_Rpb2_7"/>
    <property type="match status" value="1"/>
</dbReference>
<dbReference type="SUPFAM" id="SSF64484">
    <property type="entry name" value="beta and beta-prime subunits of DNA dependent RNA-polymerase"/>
    <property type="match status" value="1"/>
</dbReference>
<dbReference type="PROSITE" id="PS01166">
    <property type="entry name" value="RNA_POL_BETA"/>
    <property type="match status" value="1"/>
</dbReference>
<evidence type="ECO:0000255" key="1">
    <source>
        <dbReference type="HAMAP-Rule" id="MF_01321"/>
    </source>
</evidence>
<comment type="function">
    <text evidence="1">DNA-dependent RNA polymerase catalyzes the transcription of DNA into RNA using the four ribonucleoside triphosphates as substrates.</text>
</comment>
<comment type="catalytic activity">
    <reaction evidence="1">
        <text>RNA(n) + a ribonucleoside 5'-triphosphate = RNA(n+1) + diphosphate</text>
        <dbReference type="Rhea" id="RHEA:21248"/>
        <dbReference type="Rhea" id="RHEA-COMP:14527"/>
        <dbReference type="Rhea" id="RHEA-COMP:17342"/>
        <dbReference type="ChEBI" id="CHEBI:33019"/>
        <dbReference type="ChEBI" id="CHEBI:61557"/>
        <dbReference type="ChEBI" id="CHEBI:140395"/>
        <dbReference type="EC" id="2.7.7.6"/>
    </reaction>
</comment>
<comment type="subunit">
    <text evidence="1">The RNAP catalytic core consists of 2 alpha, 1 beta, 1 beta' and 1 omega subunit. When a sigma factor is associated with the core the holoenzyme is formed, which can initiate transcription.</text>
</comment>
<comment type="similarity">
    <text evidence="1">Belongs to the RNA polymerase beta chain family.</text>
</comment>
<accession>Q160X7</accession>
<keyword id="KW-0240">DNA-directed RNA polymerase</keyword>
<keyword id="KW-0548">Nucleotidyltransferase</keyword>
<keyword id="KW-1185">Reference proteome</keyword>
<keyword id="KW-0804">Transcription</keyword>
<keyword id="KW-0808">Transferase</keyword>
<protein>
    <recommendedName>
        <fullName evidence="1">DNA-directed RNA polymerase subunit beta</fullName>
        <shortName evidence="1">RNAP subunit beta</shortName>
        <ecNumber evidence="1">2.7.7.6</ecNumber>
    </recommendedName>
    <alternativeName>
        <fullName evidence="1">RNA polymerase subunit beta</fullName>
    </alternativeName>
    <alternativeName>
        <fullName evidence="1">Transcriptase subunit beta</fullName>
    </alternativeName>
</protein>
<sequence>MAQSFLGQKRLRKYYGKIREVLDMPNLIEVQKSSYDLFLNSGEAEVPTDGEGIAGVFQSVFPIKDFNETSVLEYVKYELEKPKYDVEECQQRDMTYSAPLKVTLRLIVFDVDEDTGAKSVKDIKEQDVFMGDMPLMTPNGTFVVNGTERVIVSQMHRSPGVFFDHDKGKTHSSGKLLFACRIIPYRGSWLDFEFDAKDIVFARIDRRRKLPVTTLLYSLGLDQEAIMDAYYDTITYKLEKNKGWVAPFFPDRVRGTRPTYDLVDAASGEVLFERGKKVTPRAVKKLIDEGKVTELLLPYEHIAGKFVAKDIINEETGAIYVEAGDELTLEYDKDGTLIGGTAKELVDAGITEIPVLDIDNVNVGPYMRNTMAQDKNMNRDTALMDIYRVMRPGEPPTVEAASALFDTLFFDAERYDLSAVGRVKMNMRLALDAEDTQRTLRREDIVACIKALVDLRDGRGDIDDIDHLGNRRVRSVGELMENQYRVGLLRMERAIKERMSSVEIDTVMPQDLINAKPAAAAVREFFGSSQLSQFMDQTNPLSEVTHKRRLSALGPGGLTRERAGFEVRDVHPTHYGRMCPIETPEGPNIGLINSLATFARVNKYGFIETPYRKVENRMVTDEVQYMSATEEMRHTVAQANAQLDEDGRFKNDLVSTRQSGDYTLAPSENVDLIDVSPKQLVSVAASLIPFLENDDANRALMGSNMQRQAVPLLQAEAPLVGTGIEEVVARDSGAAIMAKRAGIIDQVDAQRIVIRATSDLELGDAGVDIYRMRKFQRSNQNTCINQRPLVKVGDTVLKGQVIADGPSTDMGELALGKNVVVAFMPWNGYNYEDSILISERIARDDVFTSIHIEEFEVAARDTKLGPEEITRDIPNVGEEALRNLDEAGIVYIGADVEPGDILVGKITPKGESPMTPEEKLLRAIFGEKASDVRDTSLRVKPGDFGTVVEVRVFNRHGVEKDERALQIEREEVERLARDRDDEMAILDRNIYARLKSTILGKVAVKGPKGVSANAEITEDLLQMLPRVQWWQLALKDEGDAQVVEALNEQYEIQKRTLDARFEDKVEKVRRGDDLPPGVMKMVKVFVAVKRKLQPGDKMAGRHGNKGVISKVVPMEDMPFLADGTPVDFCLNPLGVPSRMNVGQILETHMGWAARGLGLNVDEALQEYRRSGDLTPVRDALSHAYGENVYDEGIAGMDEETLIEAAGNVTRGVPIATPVFDGAKEGDVNDALVRAGFSESGQSILFDGRTGEQFARPVTVGVKYLLKLHHLVDDKIHARSTGPYSLVTQQPLGGKAQFGGQRFGEMEVWALEAYGAAYTLQEMLTVKSDDVAGRTKVYESIVKGEDNFEAGVPESFNVLVKEVRGLGLNMELLDAEEDE</sequence>
<feature type="chain" id="PRO_0000300391" description="DNA-directed RNA polymerase subunit beta">
    <location>
        <begin position="1"/>
        <end position="1378"/>
    </location>
</feature>
<organism>
    <name type="scientific">Roseobacter denitrificans (strain ATCC 33942 / OCh 114)</name>
    <name type="common">Erythrobacter sp. (strain OCh 114)</name>
    <name type="synonym">Roseobacter denitrificans</name>
    <dbReference type="NCBI Taxonomy" id="375451"/>
    <lineage>
        <taxon>Bacteria</taxon>
        <taxon>Pseudomonadati</taxon>
        <taxon>Pseudomonadota</taxon>
        <taxon>Alphaproteobacteria</taxon>
        <taxon>Rhodobacterales</taxon>
        <taxon>Roseobacteraceae</taxon>
        <taxon>Roseobacter</taxon>
    </lineage>
</organism>
<name>RPOB_ROSDO</name>
<reference key="1">
    <citation type="journal article" date="2007" name="J. Bacteriol.">
        <title>The complete genome sequence of Roseobacter denitrificans reveals a mixotrophic rather than photosynthetic metabolism.</title>
        <authorList>
            <person name="Swingley W.D."/>
            <person name="Sadekar S."/>
            <person name="Mastrian S.D."/>
            <person name="Matthies H.J."/>
            <person name="Hao J."/>
            <person name="Ramos H."/>
            <person name="Acharya C.R."/>
            <person name="Conrad A.L."/>
            <person name="Taylor H.L."/>
            <person name="Dejesa L.C."/>
            <person name="Shah M.K."/>
            <person name="O'Huallachain M.E."/>
            <person name="Lince M.T."/>
            <person name="Blankenship R.E."/>
            <person name="Beatty J.T."/>
            <person name="Touchman J.W."/>
        </authorList>
    </citation>
    <scope>NUCLEOTIDE SEQUENCE [LARGE SCALE GENOMIC DNA]</scope>
    <source>
        <strain>ATCC 33942 / OCh 114</strain>
    </source>
</reference>